<keyword id="KW-0963">Cytoplasm</keyword>
<keyword id="KW-0210">Decarboxylase</keyword>
<keyword id="KW-0456">Lyase</keyword>
<keyword id="KW-0627">Porphyrin biosynthesis</keyword>
<keyword id="KW-1185">Reference proteome</keyword>
<dbReference type="EC" id="4.1.1.37" evidence="1"/>
<dbReference type="EMBL" id="CP000932">
    <property type="protein sequence ID" value="ACM63864.1"/>
    <property type="molecule type" value="Genomic_DNA"/>
</dbReference>
<dbReference type="RefSeq" id="WP_012661247.1">
    <property type="nucleotide sequence ID" value="NC_012039.1"/>
</dbReference>
<dbReference type="SMR" id="B9KFM9"/>
<dbReference type="STRING" id="306263.Cla_0529"/>
<dbReference type="KEGG" id="cla:CLA_0529"/>
<dbReference type="PATRIC" id="fig|306263.5.peg.513"/>
<dbReference type="eggNOG" id="COG0407">
    <property type="taxonomic scope" value="Bacteria"/>
</dbReference>
<dbReference type="HOGENOM" id="CLU_040933_0_0_7"/>
<dbReference type="UniPathway" id="UPA00251">
    <property type="reaction ID" value="UER00321"/>
</dbReference>
<dbReference type="Proteomes" id="UP000007727">
    <property type="component" value="Chromosome"/>
</dbReference>
<dbReference type="GO" id="GO:0005829">
    <property type="term" value="C:cytosol"/>
    <property type="evidence" value="ECO:0007669"/>
    <property type="project" value="TreeGrafter"/>
</dbReference>
<dbReference type="GO" id="GO:0004853">
    <property type="term" value="F:uroporphyrinogen decarboxylase activity"/>
    <property type="evidence" value="ECO:0007669"/>
    <property type="project" value="UniProtKB-UniRule"/>
</dbReference>
<dbReference type="GO" id="GO:0019353">
    <property type="term" value="P:protoporphyrinogen IX biosynthetic process from glutamate"/>
    <property type="evidence" value="ECO:0007669"/>
    <property type="project" value="TreeGrafter"/>
</dbReference>
<dbReference type="CDD" id="cd00717">
    <property type="entry name" value="URO-D"/>
    <property type="match status" value="1"/>
</dbReference>
<dbReference type="FunFam" id="3.20.20.210:FF:000007">
    <property type="entry name" value="Uroporphyrinogen decarboxylase"/>
    <property type="match status" value="1"/>
</dbReference>
<dbReference type="Gene3D" id="3.20.20.210">
    <property type="match status" value="1"/>
</dbReference>
<dbReference type="HAMAP" id="MF_00218">
    <property type="entry name" value="URO_D"/>
    <property type="match status" value="1"/>
</dbReference>
<dbReference type="InterPro" id="IPR038071">
    <property type="entry name" value="UROD/MetE-like_sf"/>
</dbReference>
<dbReference type="InterPro" id="IPR006361">
    <property type="entry name" value="Uroporphyrinogen_deCO2ase_HemE"/>
</dbReference>
<dbReference type="InterPro" id="IPR000257">
    <property type="entry name" value="Uroporphyrinogen_deCOase"/>
</dbReference>
<dbReference type="NCBIfam" id="TIGR01464">
    <property type="entry name" value="hemE"/>
    <property type="match status" value="1"/>
</dbReference>
<dbReference type="PANTHER" id="PTHR21091">
    <property type="entry name" value="METHYLTETRAHYDROFOLATE:HOMOCYSTEINE METHYLTRANSFERASE RELATED"/>
    <property type="match status" value="1"/>
</dbReference>
<dbReference type="PANTHER" id="PTHR21091:SF169">
    <property type="entry name" value="UROPORPHYRINOGEN DECARBOXYLASE"/>
    <property type="match status" value="1"/>
</dbReference>
<dbReference type="Pfam" id="PF01208">
    <property type="entry name" value="URO-D"/>
    <property type="match status" value="1"/>
</dbReference>
<dbReference type="SUPFAM" id="SSF51726">
    <property type="entry name" value="UROD/MetE-like"/>
    <property type="match status" value="1"/>
</dbReference>
<dbReference type="PROSITE" id="PS00906">
    <property type="entry name" value="UROD_1"/>
    <property type="match status" value="1"/>
</dbReference>
<dbReference type="PROSITE" id="PS00907">
    <property type="entry name" value="UROD_2"/>
    <property type="match status" value="1"/>
</dbReference>
<proteinExistence type="inferred from homology"/>
<evidence type="ECO:0000255" key="1">
    <source>
        <dbReference type="HAMAP-Rule" id="MF_00218"/>
    </source>
</evidence>
<accession>B9KFM9</accession>
<gene>
    <name evidence="1" type="primary">hemE</name>
    <name type="ordered locus">Cla_0529</name>
</gene>
<protein>
    <recommendedName>
        <fullName evidence="1">Uroporphyrinogen decarboxylase</fullName>
        <shortName evidence="1">UPD</shortName>
        <shortName evidence="1">URO-D</shortName>
        <ecNumber evidence="1">4.1.1.37</ecNumber>
    </recommendedName>
</protein>
<organism>
    <name type="scientific">Campylobacter lari (strain RM2100 / D67 / ATCC BAA-1060)</name>
    <dbReference type="NCBI Taxonomy" id="306263"/>
    <lineage>
        <taxon>Bacteria</taxon>
        <taxon>Pseudomonadati</taxon>
        <taxon>Campylobacterota</taxon>
        <taxon>Epsilonproteobacteria</taxon>
        <taxon>Campylobacterales</taxon>
        <taxon>Campylobacteraceae</taxon>
        <taxon>Campylobacter</taxon>
    </lineage>
</organism>
<feature type="chain" id="PRO_1000197512" description="Uroporphyrinogen decarboxylase">
    <location>
        <begin position="1"/>
        <end position="340"/>
    </location>
</feature>
<feature type="binding site" evidence="1">
    <location>
        <begin position="21"/>
        <end position="25"/>
    </location>
    <ligand>
        <name>substrate</name>
    </ligand>
</feature>
<feature type="binding site" evidence="1">
    <location>
        <position position="71"/>
    </location>
    <ligand>
        <name>substrate</name>
    </ligand>
</feature>
<feature type="binding site" evidence="1">
    <location>
        <position position="148"/>
    </location>
    <ligand>
        <name>substrate</name>
    </ligand>
</feature>
<feature type="binding site" evidence="1">
    <location>
        <position position="203"/>
    </location>
    <ligand>
        <name>substrate</name>
    </ligand>
</feature>
<feature type="binding site" evidence="1">
    <location>
        <position position="316"/>
    </location>
    <ligand>
        <name>substrate</name>
    </ligand>
</feature>
<feature type="site" description="Transition state stabilizer" evidence="1">
    <location>
        <position position="71"/>
    </location>
</feature>
<name>DCUP_CAMLR</name>
<sequence>MIFVDACFKKSTPYTPVWMMRQAGRYLPEYMEVRASAGDFLSLCKDYKKASEVTLQPVDILGVDAAIIFSDILVVPLEMGMDLKFEKGEGPVFSNPIKTKEDLERLDVEKSIKNLSYVYDALALTREKLAHDKALIGFCGSPWTIATYMIEGGGSKNYAKCKKLVYQNPEFLHQILSKLTLALKHYIQEQIKAGANAVQIFDSWASALEEEMFFEFSFKYMLEIADFIKEKYPHIPVILFPKGVSGFLDNINGNFDVFGVDWSTPLELAKEKLGAKYTLQGNMEPCRLYDKKAIEVGVDKILNIMQDSAHIFNLGHGILPDIPVENAKYFIKLVQEKSKK</sequence>
<comment type="function">
    <text evidence="1">Catalyzes the decarboxylation of four acetate groups of uroporphyrinogen-III to yield coproporphyrinogen-III.</text>
</comment>
<comment type="catalytic activity">
    <reaction evidence="1">
        <text>uroporphyrinogen III + 4 H(+) = coproporphyrinogen III + 4 CO2</text>
        <dbReference type="Rhea" id="RHEA:19865"/>
        <dbReference type="ChEBI" id="CHEBI:15378"/>
        <dbReference type="ChEBI" id="CHEBI:16526"/>
        <dbReference type="ChEBI" id="CHEBI:57308"/>
        <dbReference type="ChEBI" id="CHEBI:57309"/>
        <dbReference type="EC" id="4.1.1.37"/>
    </reaction>
</comment>
<comment type="pathway">
    <text evidence="1">Porphyrin-containing compound metabolism; protoporphyrin-IX biosynthesis; coproporphyrinogen-III from 5-aminolevulinate: step 4/4.</text>
</comment>
<comment type="subunit">
    <text evidence="1">Homodimer.</text>
</comment>
<comment type="subcellular location">
    <subcellularLocation>
        <location evidence="1">Cytoplasm</location>
    </subcellularLocation>
</comment>
<comment type="similarity">
    <text evidence="1">Belongs to the uroporphyrinogen decarboxylase family.</text>
</comment>
<reference key="1">
    <citation type="journal article" date="2008" name="Foodborne Pathog. Dis.">
        <title>The complete genome sequence and analysis of the human pathogen Campylobacter lari.</title>
        <authorList>
            <person name="Miller W.G."/>
            <person name="Wang G."/>
            <person name="Binnewies T.T."/>
            <person name="Parker C.T."/>
        </authorList>
    </citation>
    <scope>NUCLEOTIDE SEQUENCE [LARGE SCALE GENOMIC DNA]</scope>
    <source>
        <strain>RM2100 / D67 / ATCC BAA-1060</strain>
    </source>
</reference>